<protein>
    <recommendedName>
        <fullName evidence="1">Xanthine-guanine phosphoribosyltransferase 1</fullName>
        <shortName evidence="1">XGPRT 1</shortName>
        <ecNumber evidence="1">2.4.2.-</ecNumber>
        <ecNumber evidence="1">2.4.2.22</ecNumber>
    </recommendedName>
    <alternativeName>
        <fullName evidence="1">Xanthine phosphoribosyltransferase 1</fullName>
    </alternativeName>
</protein>
<organism>
    <name type="scientific">Haemophilus influenzae (strain 86-028NP)</name>
    <dbReference type="NCBI Taxonomy" id="281310"/>
    <lineage>
        <taxon>Bacteria</taxon>
        <taxon>Pseudomonadati</taxon>
        <taxon>Pseudomonadota</taxon>
        <taxon>Gammaproteobacteria</taxon>
        <taxon>Pasteurellales</taxon>
        <taxon>Pasteurellaceae</taxon>
        <taxon>Haemophilus</taxon>
    </lineage>
</organism>
<sequence length="155" mass="17325">MSEKYVVTWDMFQMHARRLSERLLPASQWKGIIAVSRGGLFPAAVLARELGLRHIETVCIASYHDHNNQGELQVLHAAQVPNGGEGFIVVDDLVDTGNTARAIRQMYPNAKFVTVFAKPAGAELVDDYVIDIPQNTWIEQPWDLGLTFVPPLSRK</sequence>
<feature type="chain" id="PRO_0000139672" description="Xanthine-guanine phosphoribosyltransferase 1">
    <location>
        <begin position="1"/>
        <end position="155"/>
    </location>
</feature>
<feature type="binding site" evidence="1">
    <location>
        <begin position="37"/>
        <end position="38"/>
    </location>
    <ligand>
        <name>5-phospho-alpha-D-ribose 1-diphosphate</name>
        <dbReference type="ChEBI" id="CHEBI:58017"/>
    </ligand>
</feature>
<feature type="binding site" evidence="1">
    <location>
        <begin position="91"/>
        <end position="99"/>
    </location>
    <ligand>
        <name>5-phospho-alpha-D-ribose 1-diphosphate</name>
        <dbReference type="ChEBI" id="CHEBI:58017"/>
    </ligand>
</feature>
<feature type="binding site" evidence="1">
    <location>
        <position position="92"/>
    </location>
    <ligand>
        <name>Mg(2+)</name>
        <dbReference type="ChEBI" id="CHEBI:18420"/>
    </ligand>
</feature>
<feature type="binding site" evidence="1">
    <location>
        <begin position="95"/>
        <end position="99"/>
    </location>
    <ligand>
        <name>GMP</name>
        <dbReference type="ChEBI" id="CHEBI:58115"/>
    </ligand>
</feature>
<feature type="binding site" evidence="1">
    <location>
        <position position="95"/>
    </location>
    <ligand>
        <name>guanine</name>
        <dbReference type="ChEBI" id="CHEBI:16235"/>
    </ligand>
</feature>
<feature type="binding site" evidence="1">
    <location>
        <position position="95"/>
    </location>
    <ligand>
        <name>xanthine</name>
        <dbReference type="ChEBI" id="CHEBI:17712"/>
    </ligand>
</feature>
<feature type="binding site" evidence="1">
    <location>
        <begin position="137"/>
        <end position="138"/>
    </location>
    <ligand>
        <name>GMP</name>
        <dbReference type="ChEBI" id="CHEBI:58115"/>
    </ligand>
</feature>
<feature type="binding site" evidence="1">
    <location>
        <position position="138"/>
    </location>
    <ligand>
        <name>guanine</name>
        <dbReference type="ChEBI" id="CHEBI:16235"/>
    </ligand>
</feature>
<feature type="binding site" evidence="1">
    <location>
        <position position="138"/>
    </location>
    <ligand>
        <name>xanthine</name>
        <dbReference type="ChEBI" id="CHEBI:17712"/>
    </ligand>
</feature>
<proteinExistence type="inferred from homology"/>
<accession>Q4QMP2</accession>
<keyword id="KW-0997">Cell inner membrane</keyword>
<keyword id="KW-1003">Cell membrane</keyword>
<keyword id="KW-0328">Glycosyltransferase</keyword>
<keyword id="KW-0460">Magnesium</keyword>
<keyword id="KW-0472">Membrane</keyword>
<keyword id="KW-0479">Metal-binding</keyword>
<keyword id="KW-0660">Purine salvage</keyword>
<keyword id="KW-0808">Transferase</keyword>
<evidence type="ECO:0000255" key="1">
    <source>
        <dbReference type="HAMAP-Rule" id="MF_01903"/>
    </source>
</evidence>
<dbReference type="EC" id="2.4.2.-" evidence="1"/>
<dbReference type="EC" id="2.4.2.22" evidence="1"/>
<dbReference type="EMBL" id="CP000057">
    <property type="protein sequence ID" value="AAX87705.1"/>
    <property type="molecule type" value="Genomic_DNA"/>
</dbReference>
<dbReference type="RefSeq" id="WP_005650775.1">
    <property type="nucleotide sequence ID" value="NC_007146.2"/>
</dbReference>
<dbReference type="SMR" id="Q4QMP2"/>
<dbReference type="KEGG" id="hit:NTHI0796"/>
<dbReference type="HOGENOM" id="CLU_080904_3_0_6"/>
<dbReference type="UniPathway" id="UPA00602">
    <property type="reaction ID" value="UER00658"/>
</dbReference>
<dbReference type="UniPathway" id="UPA00909">
    <property type="reaction ID" value="UER00887"/>
</dbReference>
<dbReference type="Proteomes" id="UP000002525">
    <property type="component" value="Chromosome"/>
</dbReference>
<dbReference type="GO" id="GO:0005829">
    <property type="term" value="C:cytosol"/>
    <property type="evidence" value="ECO:0007669"/>
    <property type="project" value="TreeGrafter"/>
</dbReference>
<dbReference type="GO" id="GO:0005886">
    <property type="term" value="C:plasma membrane"/>
    <property type="evidence" value="ECO:0007669"/>
    <property type="project" value="UniProtKB-SubCell"/>
</dbReference>
<dbReference type="GO" id="GO:0052657">
    <property type="term" value="F:guanine phosphoribosyltransferase activity"/>
    <property type="evidence" value="ECO:0007669"/>
    <property type="project" value="RHEA"/>
</dbReference>
<dbReference type="GO" id="GO:0004422">
    <property type="term" value="F:hypoxanthine phosphoribosyltransferase activity"/>
    <property type="evidence" value="ECO:0007669"/>
    <property type="project" value="TreeGrafter"/>
</dbReference>
<dbReference type="GO" id="GO:0000287">
    <property type="term" value="F:magnesium ion binding"/>
    <property type="evidence" value="ECO:0007669"/>
    <property type="project" value="UniProtKB-UniRule"/>
</dbReference>
<dbReference type="GO" id="GO:0000310">
    <property type="term" value="F:xanthine phosphoribosyltransferase activity"/>
    <property type="evidence" value="ECO:0007669"/>
    <property type="project" value="UniProtKB-UniRule"/>
</dbReference>
<dbReference type="GO" id="GO:0032263">
    <property type="term" value="P:GMP salvage"/>
    <property type="evidence" value="ECO:0007669"/>
    <property type="project" value="UniProtKB-UniRule"/>
</dbReference>
<dbReference type="GO" id="GO:0032264">
    <property type="term" value="P:IMP salvage"/>
    <property type="evidence" value="ECO:0007669"/>
    <property type="project" value="TreeGrafter"/>
</dbReference>
<dbReference type="GO" id="GO:0006166">
    <property type="term" value="P:purine ribonucleoside salvage"/>
    <property type="evidence" value="ECO:0007669"/>
    <property type="project" value="UniProtKB-KW"/>
</dbReference>
<dbReference type="GO" id="GO:0032265">
    <property type="term" value="P:XMP salvage"/>
    <property type="evidence" value="ECO:0007669"/>
    <property type="project" value="UniProtKB-UniRule"/>
</dbReference>
<dbReference type="CDD" id="cd06223">
    <property type="entry name" value="PRTases_typeI"/>
    <property type="match status" value="1"/>
</dbReference>
<dbReference type="FunFam" id="3.40.50.2020:FF:000009">
    <property type="entry name" value="Xanthine phosphoribosyltransferase"/>
    <property type="match status" value="1"/>
</dbReference>
<dbReference type="Gene3D" id="3.40.50.2020">
    <property type="match status" value="1"/>
</dbReference>
<dbReference type="HAMAP" id="MF_01903">
    <property type="entry name" value="XGPRT"/>
    <property type="match status" value="1"/>
</dbReference>
<dbReference type="InterPro" id="IPR000836">
    <property type="entry name" value="PRibTrfase_dom"/>
</dbReference>
<dbReference type="InterPro" id="IPR029057">
    <property type="entry name" value="PRTase-like"/>
</dbReference>
<dbReference type="InterPro" id="IPR023747">
    <property type="entry name" value="Xanthine_Guanine_PRibTrfase"/>
</dbReference>
<dbReference type="NCBIfam" id="NF006613">
    <property type="entry name" value="PRK09177.1"/>
    <property type="match status" value="1"/>
</dbReference>
<dbReference type="PANTHER" id="PTHR39563">
    <property type="entry name" value="XANTHINE PHOSPHORIBOSYLTRANSFERASE"/>
    <property type="match status" value="1"/>
</dbReference>
<dbReference type="PANTHER" id="PTHR39563:SF1">
    <property type="entry name" value="XANTHINE-GUANINE PHOSPHORIBOSYLTRANSFERASE"/>
    <property type="match status" value="1"/>
</dbReference>
<dbReference type="Pfam" id="PF00156">
    <property type="entry name" value="Pribosyltran"/>
    <property type="match status" value="1"/>
</dbReference>
<dbReference type="SUPFAM" id="SSF53271">
    <property type="entry name" value="PRTase-like"/>
    <property type="match status" value="1"/>
</dbReference>
<dbReference type="PROSITE" id="PS00103">
    <property type="entry name" value="PUR_PYR_PR_TRANSFER"/>
    <property type="match status" value="1"/>
</dbReference>
<reference key="1">
    <citation type="journal article" date="2005" name="J. Bacteriol.">
        <title>Genomic sequence of an otitis media isolate of nontypeable Haemophilus influenzae: comparative study with H. influenzae serotype d, strain KW20.</title>
        <authorList>
            <person name="Harrison A."/>
            <person name="Dyer D.W."/>
            <person name="Gillaspy A."/>
            <person name="Ray W.C."/>
            <person name="Mungur R."/>
            <person name="Carson M.B."/>
            <person name="Zhong H."/>
            <person name="Gipson J."/>
            <person name="Gipson M."/>
            <person name="Johnson L.S."/>
            <person name="Lewis L."/>
            <person name="Bakaletz L.O."/>
            <person name="Munson R.S. Jr."/>
        </authorList>
    </citation>
    <scope>NUCLEOTIDE SEQUENCE [LARGE SCALE GENOMIC DNA]</scope>
    <source>
        <strain>86-028NP</strain>
    </source>
</reference>
<name>XGPT1_HAEI8</name>
<gene>
    <name evidence="1" type="primary">gpt1</name>
    <name type="ordered locus">NTHI0796</name>
</gene>
<comment type="function">
    <text evidence="1">Purine salvage pathway enzyme that catalyzes the transfer of the ribosyl-5-phosphate group from 5-phospho-alpha-D-ribose 1-diphosphate (PRPP) to the N9 position of the 6-oxopurines guanine and xanthine to form the corresponding ribonucleotides GMP (guanosine 5'-monophosphate) and XMP (xanthosine 5'-monophosphate), with the release of PPi. To a lesser extent, also acts on hypoxanthine.</text>
</comment>
<comment type="catalytic activity">
    <reaction evidence="1">
        <text>GMP + diphosphate = guanine + 5-phospho-alpha-D-ribose 1-diphosphate</text>
        <dbReference type="Rhea" id="RHEA:25424"/>
        <dbReference type="ChEBI" id="CHEBI:16235"/>
        <dbReference type="ChEBI" id="CHEBI:33019"/>
        <dbReference type="ChEBI" id="CHEBI:58017"/>
        <dbReference type="ChEBI" id="CHEBI:58115"/>
    </reaction>
    <physiologicalReaction direction="right-to-left" evidence="1">
        <dbReference type="Rhea" id="RHEA:25426"/>
    </physiologicalReaction>
</comment>
<comment type="catalytic activity">
    <reaction evidence="1">
        <text>XMP + diphosphate = xanthine + 5-phospho-alpha-D-ribose 1-diphosphate</text>
        <dbReference type="Rhea" id="RHEA:10800"/>
        <dbReference type="ChEBI" id="CHEBI:17712"/>
        <dbReference type="ChEBI" id="CHEBI:33019"/>
        <dbReference type="ChEBI" id="CHEBI:57464"/>
        <dbReference type="ChEBI" id="CHEBI:58017"/>
        <dbReference type="EC" id="2.4.2.22"/>
    </reaction>
    <physiologicalReaction direction="right-to-left" evidence="1">
        <dbReference type="Rhea" id="RHEA:10802"/>
    </physiologicalReaction>
</comment>
<comment type="catalytic activity">
    <reaction evidence="1">
        <text>IMP + diphosphate = hypoxanthine + 5-phospho-alpha-D-ribose 1-diphosphate</text>
        <dbReference type="Rhea" id="RHEA:17973"/>
        <dbReference type="ChEBI" id="CHEBI:17368"/>
        <dbReference type="ChEBI" id="CHEBI:33019"/>
        <dbReference type="ChEBI" id="CHEBI:58017"/>
        <dbReference type="ChEBI" id="CHEBI:58053"/>
    </reaction>
    <physiologicalReaction direction="right-to-left" evidence="1">
        <dbReference type="Rhea" id="RHEA:17975"/>
    </physiologicalReaction>
</comment>
<comment type="cofactor">
    <cofactor evidence="1">
        <name>Mg(2+)</name>
        <dbReference type="ChEBI" id="CHEBI:18420"/>
    </cofactor>
</comment>
<comment type="pathway">
    <text evidence="1">Purine metabolism; GMP biosynthesis via salvage pathway; GMP from guanine: step 1/1.</text>
</comment>
<comment type="pathway">
    <text evidence="1">Purine metabolism; XMP biosynthesis via salvage pathway; XMP from xanthine: step 1/1.</text>
</comment>
<comment type="subunit">
    <text evidence="1">Homotetramer.</text>
</comment>
<comment type="subcellular location">
    <subcellularLocation>
        <location evidence="1">Cell inner membrane</location>
        <topology evidence="1">Peripheral membrane protein</topology>
    </subcellularLocation>
</comment>
<comment type="similarity">
    <text evidence="1">Belongs to the purine/pyrimidine phosphoribosyltransferase family. XGPT subfamily.</text>
</comment>